<proteinExistence type="inferred from homology"/>
<name>IXTPA_SULDN</name>
<comment type="function">
    <text evidence="1">Pyrophosphatase that catalyzes the hydrolysis of nucleoside triphosphates to their monophosphate derivatives, with a high preference for the non-canonical purine nucleotides XTP (xanthosine triphosphate), dITP (deoxyinosine triphosphate) and ITP. Seems to function as a house-cleaning enzyme that removes non-canonical purine nucleotides from the nucleotide pool, thus preventing their incorporation into DNA/RNA and avoiding chromosomal lesions.</text>
</comment>
<comment type="catalytic activity">
    <reaction evidence="1">
        <text>XTP + H2O = XMP + diphosphate + H(+)</text>
        <dbReference type="Rhea" id="RHEA:28610"/>
        <dbReference type="ChEBI" id="CHEBI:15377"/>
        <dbReference type="ChEBI" id="CHEBI:15378"/>
        <dbReference type="ChEBI" id="CHEBI:33019"/>
        <dbReference type="ChEBI" id="CHEBI:57464"/>
        <dbReference type="ChEBI" id="CHEBI:61314"/>
        <dbReference type="EC" id="3.6.1.66"/>
    </reaction>
</comment>
<comment type="catalytic activity">
    <reaction evidence="1">
        <text>dITP + H2O = dIMP + diphosphate + H(+)</text>
        <dbReference type="Rhea" id="RHEA:28342"/>
        <dbReference type="ChEBI" id="CHEBI:15377"/>
        <dbReference type="ChEBI" id="CHEBI:15378"/>
        <dbReference type="ChEBI" id="CHEBI:33019"/>
        <dbReference type="ChEBI" id="CHEBI:61194"/>
        <dbReference type="ChEBI" id="CHEBI:61382"/>
        <dbReference type="EC" id="3.6.1.66"/>
    </reaction>
</comment>
<comment type="catalytic activity">
    <reaction evidence="1">
        <text>ITP + H2O = IMP + diphosphate + H(+)</text>
        <dbReference type="Rhea" id="RHEA:29399"/>
        <dbReference type="ChEBI" id="CHEBI:15377"/>
        <dbReference type="ChEBI" id="CHEBI:15378"/>
        <dbReference type="ChEBI" id="CHEBI:33019"/>
        <dbReference type="ChEBI" id="CHEBI:58053"/>
        <dbReference type="ChEBI" id="CHEBI:61402"/>
        <dbReference type="EC" id="3.6.1.66"/>
    </reaction>
</comment>
<comment type="cofactor">
    <cofactor evidence="1">
        <name>Mg(2+)</name>
        <dbReference type="ChEBI" id="CHEBI:18420"/>
    </cofactor>
    <text evidence="1">Binds 1 Mg(2+) ion per subunit.</text>
</comment>
<comment type="subunit">
    <text evidence="1">Homodimer.</text>
</comment>
<comment type="similarity">
    <text evidence="1">Belongs to the HAM1 NTPase family.</text>
</comment>
<reference key="1">
    <citation type="journal article" date="2008" name="Appl. Environ. Microbiol.">
        <title>Genome of the epsilonproteobacterial chemolithoautotroph Sulfurimonas denitrificans.</title>
        <authorList>
            <person name="Sievert S.M."/>
            <person name="Scott K.M."/>
            <person name="Klotz M.G."/>
            <person name="Chain P.S.G."/>
            <person name="Hauser L.J."/>
            <person name="Hemp J."/>
            <person name="Huegler M."/>
            <person name="Land M."/>
            <person name="Lapidus A."/>
            <person name="Larimer F.W."/>
            <person name="Lucas S."/>
            <person name="Malfatti S.A."/>
            <person name="Meyer F."/>
            <person name="Paulsen I.T."/>
            <person name="Ren Q."/>
            <person name="Simon J."/>
            <person name="Bailey K."/>
            <person name="Diaz E."/>
            <person name="Fitzpatrick K.A."/>
            <person name="Glover B."/>
            <person name="Gwatney N."/>
            <person name="Korajkic A."/>
            <person name="Long A."/>
            <person name="Mobberley J.M."/>
            <person name="Pantry S.N."/>
            <person name="Pazder G."/>
            <person name="Peterson S."/>
            <person name="Quintanilla J.D."/>
            <person name="Sprinkle R."/>
            <person name="Stephens J."/>
            <person name="Thomas P."/>
            <person name="Vaughn R."/>
            <person name="Weber M.J."/>
            <person name="Wooten L.L."/>
        </authorList>
    </citation>
    <scope>NUCLEOTIDE SEQUENCE [LARGE SCALE GENOMIC DNA]</scope>
    <source>
        <strain>ATCC 33889 / DSM 1251</strain>
    </source>
</reference>
<sequence>MRLILATSNRGKVKEIKALCKDFKVIPYSELIEEFEIIEDASTFKGNALIKARAVFKVLSQKDEYKDMVVLADDSGISVDVLGGAPGIYSARYASKGASDKENLYKLIEDVKKSGAKGSPAHYTAAIAIVTKNYEYSVHGWMYGDVIAEVRGDGGFGYDPMFIPLGYDKTLGELDDDTKKNISHRAKALSLAKIILQTL</sequence>
<protein>
    <recommendedName>
        <fullName evidence="1">dITP/XTP pyrophosphatase</fullName>
        <ecNumber evidence="1">3.6.1.66</ecNumber>
    </recommendedName>
    <alternativeName>
        <fullName evidence="1">Non-canonical purine NTP pyrophosphatase</fullName>
    </alternativeName>
    <alternativeName>
        <fullName evidence="1">Non-standard purine NTP pyrophosphatase</fullName>
    </alternativeName>
    <alternativeName>
        <fullName evidence="1">Nucleoside-triphosphate diphosphatase</fullName>
    </alternativeName>
    <alternativeName>
        <fullName evidence="1">Nucleoside-triphosphate pyrophosphatase</fullName>
        <shortName evidence="1">NTPase</shortName>
    </alternativeName>
</protein>
<feature type="chain" id="PRO_1000073509" description="dITP/XTP pyrophosphatase">
    <location>
        <begin position="1"/>
        <end position="199"/>
    </location>
</feature>
<feature type="active site" description="Proton acceptor" evidence="1">
    <location>
        <position position="74"/>
    </location>
</feature>
<feature type="binding site" evidence="1">
    <location>
        <begin position="7"/>
        <end position="12"/>
    </location>
    <ligand>
        <name>substrate</name>
    </ligand>
</feature>
<feature type="binding site" evidence="1">
    <location>
        <position position="74"/>
    </location>
    <ligand>
        <name>Mg(2+)</name>
        <dbReference type="ChEBI" id="CHEBI:18420"/>
    </ligand>
</feature>
<feature type="binding site" evidence="1">
    <location>
        <position position="75"/>
    </location>
    <ligand>
        <name>substrate</name>
    </ligand>
</feature>
<feature type="binding site" evidence="1">
    <location>
        <begin position="156"/>
        <end position="159"/>
    </location>
    <ligand>
        <name>substrate</name>
    </ligand>
</feature>
<feature type="binding site" evidence="1">
    <location>
        <position position="179"/>
    </location>
    <ligand>
        <name>substrate</name>
    </ligand>
</feature>
<feature type="binding site" evidence="1">
    <location>
        <begin position="184"/>
        <end position="185"/>
    </location>
    <ligand>
        <name>substrate</name>
    </ligand>
</feature>
<gene>
    <name type="ordered locus">Suden_0071</name>
</gene>
<organism>
    <name type="scientific">Sulfurimonas denitrificans (strain ATCC 33889 / DSM 1251)</name>
    <name type="common">Thiomicrospira denitrificans (strain ATCC 33889 / DSM 1251)</name>
    <dbReference type="NCBI Taxonomy" id="326298"/>
    <lineage>
        <taxon>Bacteria</taxon>
        <taxon>Pseudomonadati</taxon>
        <taxon>Campylobacterota</taxon>
        <taxon>Epsilonproteobacteria</taxon>
        <taxon>Campylobacterales</taxon>
        <taxon>Sulfurimonadaceae</taxon>
        <taxon>Sulfurimonas</taxon>
    </lineage>
</organism>
<keyword id="KW-0378">Hydrolase</keyword>
<keyword id="KW-0460">Magnesium</keyword>
<keyword id="KW-0479">Metal-binding</keyword>
<keyword id="KW-0546">Nucleotide metabolism</keyword>
<keyword id="KW-0547">Nucleotide-binding</keyword>
<keyword id="KW-1185">Reference proteome</keyword>
<dbReference type="EC" id="3.6.1.66" evidence="1"/>
<dbReference type="EMBL" id="CP000153">
    <property type="protein sequence ID" value="ABB43352.1"/>
    <property type="molecule type" value="Genomic_DNA"/>
</dbReference>
<dbReference type="RefSeq" id="WP_011371707.1">
    <property type="nucleotide sequence ID" value="NC_007575.1"/>
</dbReference>
<dbReference type="SMR" id="Q30UH9"/>
<dbReference type="STRING" id="326298.Suden_0071"/>
<dbReference type="KEGG" id="tdn:Suden_0071"/>
<dbReference type="eggNOG" id="COG0127">
    <property type="taxonomic scope" value="Bacteria"/>
</dbReference>
<dbReference type="HOGENOM" id="CLU_082080_0_2_7"/>
<dbReference type="OrthoDB" id="9807456at2"/>
<dbReference type="Proteomes" id="UP000002714">
    <property type="component" value="Chromosome"/>
</dbReference>
<dbReference type="GO" id="GO:0005829">
    <property type="term" value="C:cytosol"/>
    <property type="evidence" value="ECO:0007669"/>
    <property type="project" value="TreeGrafter"/>
</dbReference>
<dbReference type="GO" id="GO:0035870">
    <property type="term" value="F:dITP diphosphatase activity"/>
    <property type="evidence" value="ECO:0007669"/>
    <property type="project" value="RHEA"/>
</dbReference>
<dbReference type="GO" id="GO:0036220">
    <property type="term" value="F:ITP diphosphatase activity"/>
    <property type="evidence" value="ECO:0007669"/>
    <property type="project" value="UniProtKB-EC"/>
</dbReference>
<dbReference type="GO" id="GO:0046872">
    <property type="term" value="F:metal ion binding"/>
    <property type="evidence" value="ECO:0007669"/>
    <property type="project" value="UniProtKB-KW"/>
</dbReference>
<dbReference type="GO" id="GO:0000166">
    <property type="term" value="F:nucleotide binding"/>
    <property type="evidence" value="ECO:0007669"/>
    <property type="project" value="UniProtKB-KW"/>
</dbReference>
<dbReference type="GO" id="GO:0017111">
    <property type="term" value="F:ribonucleoside triphosphate phosphatase activity"/>
    <property type="evidence" value="ECO:0007669"/>
    <property type="project" value="InterPro"/>
</dbReference>
<dbReference type="GO" id="GO:0036222">
    <property type="term" value="F:XTP diphosphatase activity"/>
    <property type="evidence" value="ECO:0007669"/>
    <property type="project" value="RHEA"/>
</dbReference>
<dbReference type="GO" id="GO:0009117">
    <property type="term" value="P:nucleotide metabolic process"/>
    <property type="evidence" value="ECO:0007669"/>
    <property type="project" value="UniProtKB-KW"/>
</dbReference>
<dbReference type="GO" id="GO:0009146">
    <property type="term" value="P:purine nucleoside triphosphate catabolic process"/>
    <property type="evidence" value="ECO:0007669"/>
    <property type="project" value="UniProtKB-UniRule"/>
</dbReference>
<dbReference type="CDD" id="cd00515">
    <property type="entry name" value="HAM1"/>
    <property type="match status" value="1"/>
</dbReference>
<dbReference type="FunFam" id="3.90.950.10:FF:000001">
    <property type="entry name" value="dITP/XTP pyrophosphatase"/>
    <property type="match status" value="1"/>
</dbReference>
<dbReference type="Gene3D" id="3.90.950.10">
    <property type="match status" value="1"/>
</dbReference>
<dbReference type="HAMAP" id="MF_01405">
    <property type="entry name" value="Non_canon_purine_NTPase"/>
    <property type="match status" value="1"/>
</dbReference>
<dbReference type="InterPro" id="IPR020922">
    <property type="entry name" value="dITP/XTP_pyrophosphatase"/>
</dbReference>
<dbReference type="InterPro" id="IPR029001">
    <property type="entry name" value="ITPase-like_fam"/>
</dbReference>
<dbReference type="InterPro" id="IPR002637">
    <property type="entry name" value="RdgB/HAM1"/>
</dbReference>
<dbReference type="NCBIfam" id="TIGR00042">
    <property type="entry name" value="RdgB/HAM1 family non-canonical purine NTP pyrophosphatase"/>
    <property type="match status" value="1"/>
</dbReference>
<dbReference type="PANTHER" id="PTHR11067:SF9">
    <property type="entry name" value="INOSINE TRIPHOSPHATE PYROPHOSPHATASE"/>
    <property type="match status" value="1"/>
</dbReference>
<dbReference type="PANTHER" id="PTHR11067">
    <property type="entry name" value="INOSINE TRIPHOSPHATE PYROPHOSPHATASE/HAM1 PROTEIN"/>
    <property type="match status" value="1"/>
</dbReference>
<dbReference type="Pfam" id="PF01725">
    <property type="entry name" value="Ham1p_like"/>
    <property type="match status" value="1"/>
</dbReference>
<dbReference type="SUPFAM" id="SSF52972">
    <property type="entry name" value="ITPase-like"/>
    <property type="match status" value="1"/>
</dbReference>
<evidence type="ECO:0000255" key="1">
    <source>
        <dbReference type="HAMAP-Rule" id="MF_01405"/>
    </source>
</evidence>
<accession>Q30UH9</accession>